<accession>P86568</accession>
<proteinExistence type="evidence at protein level"/>
<comment type="subcellular location">
    <subcellularLocation>
        <location evidence="1 3">Secreted</location>
    </subcellularLocation>
</comment>
<comment type="tissue specificity">
    <text evidence="1">Expressed in the antennal lobe (at protein level).</text>
</comment>
<feature type="peptide" id="PRO_0000395637" description="Tachykinin-related peptide 6" evidence="1">
    <location>
        <begin position="1"/>
        <end position="10"/>
    </location>
</feature>
<feature type="modified residue" description="Arginine amide" evidence="1">
    <location>
        <position position="10"/>
    </location>
</feature>
<keyword id="KW-0027">Amidation</keyword>
<keyword id="KW-0903">Direct protein sequencing</keyword>
<keyword id="KW-0527">Neuropeptide</keyword>
<keyword id="KW-0964">Secreted</keyword>
<reference evidence="3" key="1">
    <citation type="journal article" date="2009" name="Peptides">
        <title>Neuropeptides in Heteroptera: identification of allatotropin-related peptide and tachykinin-related peptides using MALDI-TOF mass spectrometry.</title>
        <authorList>
            <person name="Neupert S."/>
            <person name="Russell W.K."/>
            <person name="Russell D.H."/>
            <person name="Lopez J.D. Jr."/>
            <person name="Predel R."/>
            <person name="Nachman R.J."/>
        </authorList>
    </citation>
    <scope>PROTEIN SEQUENCE</scope>
    <scope>SUBCELLULAR LOCATION</scope>
    <scope>TISSUE SPECIFICITY</scope>
    <scope>AMIDATION AT ARG-10</scope>
    <source>
        <tissue evidence="1">Antennal lobe</tissue>
    </source>
</reference>
<protein>
    <recommendedName>
        <fullName evidence="2">Tachykinin-related peptide 6</fullName>
        <shortName evidence="2">TKRP-6</shortName>
    </recommendedName>
</protein>
<organism>
    <name type="scientific">Banasa dimiata</name>
    <name type="common">Banasa stink bug</name>
    <name type="synonym">Pentatoma dimiata</name>
    <dbReference type="NCBI Taxonomy" id="756487"/>
    <lineage>
        <taxon>Eukaryota</taxon>
        <taxon>Metazoa</taxon>
        <taxon>Ecdysozoa</taxon>
        <taxon>Arthropoda</taxon>
        <taxon>Hexapoda</taxon>
        <taxon>Insecta</taxon>
        <taxon>Pterygota</taxon>
        <taxon>Neoptera</taxon>
        <taxon>Paraneoptera</taxon>
        <taxon>Hemiptera</taxon>
        <taxon>Heteroptera</taxon>
        <taxon>Panheteroptera</taxon>
        <taxon>Pentatomomorpha</taxon>
        <taxon>Pentatomoidea</taxon>
        <taxon>Pentatomidae</taxon>
        <taxon>Pentatominae</taxon>
        <taxon>Banasa</taxon>
    </lineage>
</organism>
<sequence>APSMGFMGMR</sequence>
<dbReference type="GO" id="GO:0005576">
    <property type="term" value="C:extracellular region"/>
    <property type="evidence" value="ECO:0007005"/>
    <property type="project" value="UniProtKB"/>
</dbReference>
<dbReference type="GO" id="GO:0007218">
    <property type="term" value="P:neuropeptide signaling pathway"/>
    <property type="evidence" value="ECO:0007669"/>
    <property type="project" value="UniProtKB-KW"/>
</dbReference>
<name>TRP6_BANDI</name>
<evidence type="ECO:0000269" key="1">
    <source>
    </source>
</evidence>
<evidence type="ECO:0000303" key="2">
    <source>
    </source>
</evidence>
<evidence type="ECO:0000305" key="3"/>